<reference key="1">
    <citation type="journal article" date="1992" name="J. Bacteriol.">
        <title>Characterization of In0 of Pseudomonas aeruginosa plasmid pVS1, an ancestor of integrons of multiresistance plasmids and transposons of Gram-negative bacteria.</title>
        <authorList>
            <person name="Bissonnette L."/>
            <person name="Roy P.H."/>
        </authorList>
    </citation>
    <scope>NUCLEOTIDE SEQUENCE [GENOMIC DNA]</scope>
</reference>
<proteinExistence type="inferred from homology"/>
<sequence>MKGWLFLVIAIVGEVIATSALKSSEGFTKLAPSAVVIIGYGIAFYFLSLVLKSIPVGVAYAVWSGLGVVIITAIAWLLHGQKLDAWGFVGMGLIIAAFLLARSPSWKSLRRPTPW</sequence>
<evidence type="ECO:0000255" key="1"/>
<evidence type="ECO:0000305" key="2"/>
<gene>
    <name type="primary">ebr</name>
    <name type="synonym">E1</name>
</gene>
<geneLocation type="plasmid">
    <name>pVS1</name>
</geneLocation>
<feature type="chain" id="PRO_0000108073" description="Putative ethidium bromide resistance protein">
    <location>
        <begin position="1"/>
        <end position="115"/>
    </location>
</feature>
<feature type="transmembrane region" description="Helical" evidence="1">
    <location>
        <begin position="4"/>
        <end position="21"/>
    </location>
</feature>
<feature type="transmembrane region" description="Helical" evidence="1">
    <location>
        <begin position="30"/>
        <end position="47"/>
    </location>
</feature>
<feature type="transmembrane region" description="Helical" evidence="1">
    <location>
        <begin position="58"/>
        <end position="79"/>
    </location>
</feature>
<feature type="transmembrane region" description="Helical" evidence="1">
    <location>
        <begin position="85"/>
        <end position="104"/>
    </location>
</feature>
<accession>P0AA24</accession>
<accession>P14502</accession>
<name>EBR_PSEAI</name>
<protein>
    <recommendedName>
        <fullName>Putative ethidium bromide resistance protein</fullName>
    </recommendedName>
    <alternativeName>
        <fullName>E1 protein</fullName>
    </alternativeName>
</protein>
<comment type="function">
    <text>One of the determinants for resistance to ethidium bromide and quaternary ammonium compounds.</text>
</comment>
<comment type="subcellular location">
    <subcellularLocation>
        <location evidence="2">Cell membrane</location>
        <topology evidence="2">Multi-pass membrane protein</topology>
    </subcellularLocation>
</comment>
<comment type="similarity">
    <text evidence="2">Belongs to the drug/metabolite transporter (DMT) superfamily. Small multidrug resistance (SMR) (TC 2.A.7.1) family.</text>
</comment>
<organism>
    <name type="scientific">Pseudomonas aeruginosa</name>
    <dbReference type="NCBI Taxonomy" id="287"/>
    <lineage>
        <taxon>Bacteria</taxon>
        <taxon>Pseudomonadati</taxon>
        <taxon>Pseudomonadota</taxon>
        <taxon>Gammaproteobacteria</taxon>
        <taxon>Pseudomonadales</taxon>
        <taxon>Pseudomonadaceae</taxon>
        <taxon>Pseudomonas</taxon>
    </lineage>
</organism>
<dbReference type="EMBL" id="U49101">
    <property type="protein sequence ID" value="AAC44316.1"/>
    <property type="molecule type" value="Genomic_DNA"/>
</dbReference>
<dbReference type="EMBL" id="M73819">
    <property type="protein sequence ID" value="AAA25858.1"/>
    <property type="molecule type" value="Genomic_DNA"/>
</dbReference>
<dbReference type="PIR" id="B42646">
    <property type="entry name" value="B42646"/>
</dbReference>
<dbReference type="RefSeq" id="YP_007509600.1">
    <property type="nucleotide sequence ID" value="NC_020452.1"/>
</dbReference>
<dbReference type="RefSeq" id="YP_245439.1">
    <property type="nucleotide sequence ID" value="NC_007100.1"/>
</dbReference>
<dbReference type="SMR" id="P0AA24"/>
<dbReference type="GO" id="GO:0005886">
    <property type="term" value="C:plasma membrane"/>
    <property type="evidence" value="ECO:0007669"/>
    <property type="project" value="UniProtKB-SubCell"/>
</dbReference>
<dbReference type="GO" id="GO:0022857">
    <property type="term" value="F:transmembrane transporter activity"/>
    <property type="evidence" value="ECO:0007669"/>
    <property type="project" value="InterPro"/>
</dbReference>
<dbReference type="FunFam" id="1.10.3730.20:FF:000001">
    <property type="entry name" value="Quaternary ammonium compound resistance transporter SugE"/>
    <property type="match status" value="1"/>
</dbReference>
<dbReference type="Gene3D" id="1.10.3730.20">
    <property type="match status" value="1"/>
</dbReference>
<dbReference type="InterPro" id="IPR000390">
    <property type="entry name" value="Small_drug/metabolite_transptr"/>
</dbReference>
<dbReference type="InterPro" id="IPR045324">
    <property type="entry name" value="Small_multidrug_res"/>
</dbReference>
<dbReference type="NCBIfam" id="NF000276">
    <property type="entry name" value="SMR_qac_E"/>
    <property type="match status" value="1"/>
</dbReference>
<dbReference type="PANTHER" id="PTHR30561:SF1">
    <property type="entry name" value="MULTIDRUG TRANSPORTER EMRE"/>
    <property type="match status" value="1"/>
</dbReference>
<dbReference type="PANTHER" id="PTHR30561">
    <property type="entry name" value="SMR FAMILY PROTON-DEPENDENT DRUG EFFLUX TRANSPORTER SUGE"/>
    <property type="match status" value="1"/>
</dbReference>
<dbReference type="Pfam" id="PF00893">
    <property type="entry name" value="Multi_Drug_Res"/>
    <property type="match status" value="1"/>
</dbReference>
<dbReference type="SUPFAM" id="SSF103481">
    <property type="entry name" value="Multidrug resistance efflux transporter EmrE"/>
    <property type="match status" value="1"/>
</dbReference>
<keyword id="KW-1003">Cell membrane</keyword>
<keyword id="KW-0472">Membrane</keyword>
<keyword id="KW-0614">Plasmid</keyword>
<keyword id="KW-0812">Transmembrane</keyword>
<keyword id="KW-1133">Transmembrane helix</keyword>
<keyword id="KW-0813">Transport</keyword>